<sequence length="402" mass="44031">MSSVSQARSLGKYFLLIDNMLVVLGFFVVFPLISIRFVDSLGWAALMVGIALGLRQLVQQGLGIFGGAIADRLGARPMIVTGMLLRAAGFATMAVAHEPWVLWLSCVLSGLGGTLFDPPRSALVVKLVRPQERGRFFSLLMMQDSAGAVTGALIGSWLLQYDFRLVCGVGALLFVLCAGFNAWLLPDWKLSTVRTPLREGMGRVLRDRRFVTYVLTLTGYYMLAVQVMLMLPVMVNDIAGEPAAVKWMYAIEAVLSLTLLYPLARWSEKRFRLEQRLMAGLLVMTFSLVPIGLASNLQQLFTLICLFYIGSIIAEPARETLSASLADARARGSYMGFSRLGLAFGGALGYAGGGWLFDAGRALHTPELPWAMLGVIGVGTFLMLWWQFSQKRLAPGLLEQES</sequence>
<feature type="chain" id="PRO_1000068679" description="Multidrug resistance protein MdtH">
    <location>
        <begin position="1"/>
        <end position="402"/>
    </location>
</feature>
<feature type="transmembrane region" description="Helical" evidence="1">
    <location>
        <begin position="13"/>
        <end position="33"/>
    </location>
</feature>
<feature type="transmembrane region" description="Helical" evidence="1">
    <location>
        <begin position="34"/>
        <end position="54"/>
    </location>
</feature>
<feature type="transmembrane region" description="Helical" evidence="1">
    <location>
        <begin position="99"/>
        <end position="116"/>
    </location>
</feature>
<feature type="transmembrane region" description="Helical" evidence="1">
    <location>
        <begin position="139"/>
        <end position="159"/>
    </location>
</feature>
<feature type="transmembrane region" description="Helical" evidence="1">
    <location>
        <begin position="165"/>
        <end position="185"/>
    </location>
</feature>
<feature type="transmembrane region" description="Helical" evidence="1">
    <location>
        <begin position="214"/>
        <end position="234"/>
    </location>
</feature>
<feature type="transmembrane region" description="Helical" evidence="1">
    <location>
        <begin position="243"/>
        <end position="263"/>
    </location>
</feature>
<feature type="transmembrane region" description="Helical" evidence="1">
    <location>
        <begin position="277"/>
        <end position="297"/>
    </location>
</feature>
<feature type="transmembrane region" description="Helical" evidence="1">
    <location>
        <begin position="300"/>
        <end position="320"/>
    </location>
</feature>
<feature type="transmembrane region" description="Helical" evidence="1">
    <location>
        <begin position="340"/>
        <end position="360"/>
    </location>
</feature>
<feature type="transmembrane region" description="Helical" evidence="1">
    <location>
        <begin position="368"/>
        <end position="388"/>
    </location>
</feature>
<evidence type="ECO:0000255" key="1">
    <source>
        <dbReference type="HAMAP-Rule" id="MF_01529"/>
    </source>
</evidence>
<comment type="subcellular location">
    <subcellularLocation>
        <location evidence="1">Cell inner membrane</location>
        <topology evidence="1">Multi-pass membrane protein</topology>
    </subcellularLocation>
</comment>
<comment type="similarity">
    <text evidence="1">Belongs to the major facilitator superfamily. DHA1 family. MdtH (TC 2.A.1.2.21) subfamily.</text>
</comment>
<reference key="1">
    <citation type="journal article" date="2010" name="PLoS ONE">
        <title>Genome sequence of Cronobacter sakazakii BAA-894 and comparative genomic hybridization analysis with other Cronobacter species.</title>
        <authorList>
            <person name="Kucerova E."/>
            <person name="Clifton S.W."/>
            <person name="Xia X.Q."/>
            <person name="Long F."/>
            <person name="Porwollik S."/>
            <person name="Fulton L."/>
            <person name="Fronick C."/>
            <person name="Minx P."/>
            <person name="Kyung K."/>
            <person name="Warren W."/>
            <person name="Fulton R."/>
            <person name="Feng D."/>
            <person name="Wollam A."/>
            <person name="Shah N."/>
            <person name="Bhonagiri V."/>
            <person name="Nash W.E."/>
            <person name="Hallsworth-Pepin K."/>
            <person name="Wilson R.K."/>
            <person name="McClelland M."/>
            <person name="Forsythe S.J."/>
        </authorList>
    </citation>
    <scope>NUCLEOTIDE SEQUENCE [LARGE SCALE GENOMIC DNA]</scope>
    <source>
        <strain>ATCC BAA-894</strain>
    </source>
</reference>
<name>MDTH_CROS8</name>
<proteinExistence type="inferred from homology"/>
<keyword id="KW-0997">Cell inner membrane</keyword>
<keyword id="KW-1003">Cell membrane</keyword>
<keyword id="KW-0472">Membrane</keyword>
<keyword id="KW-1185">Reference proteome</keyword>
<keyword id="KW-0812">Transmembrane</keyword>
<keyword id="KW-1133">Transmembrane helix</keyword>
<keyword id="KW-0813">Transport</keyword>
<gene>
    <name evidence="1" type="primary">mdtH</name>
    <name type="ordered locus">ESA_02283</name>
</gene>
<dbReference type="EMBL" id="CP000783">
    <property type="protein sequence ID" value="ABU77532.1"/>
    <property type="molecule type" value="Genomic_DNA"/>
</dbReference>
<dbReference type="RefSeq" id="WP_007866766.1">
    <property type="nucleotide sequence ID" value="NC_009778.1"/>
</dbReference>
<dbReference type="SMR" id="A7MG31"/>
<dbReference type="GeneID" id="56731090"/>
<dbReference type="KEGG" id="esa:ESA_02283"/>
<dbReference type="HOGENOM" id="CLU_001265_60_2_6"/>
<dbReference type="Proteomes" id="UP000000260">
    <property type="component" value="Chromosome"/>
</dbReference>
<dbReference type="GO" id="GO:0005886">
    <property type="term" value="C:plasma membrane"/>
    <property type="evidence" value="ECO:0007669"/>
    <property type="project" value="UniProtKB-SubCell"/>
</dbReference>
<dbReference type="GO" id="GO:0022857">
    <property type="term" value="F:transmembrane transporter activity"/>
    <property type="evidence" value="ECO:0007669"/>
    <property type="project" value="UniProtKB-UniRule"/>
</dbReference>
<dbReference type="CDD" id="cd17329">
    <property type="entry name" value="MFS_MdtH_MDR_like"/>
    <property type="match status" value="1"/>
</dbReference>
<dbReference type="Gene3D" id="1.20.1250.20">
    <property type="entry name" value="MFS general substrate transporter like domains"/>
    <property type="match status" value="1"/>
</dbReference>
<dbReference type="HAMAP" id="MF_01529">
    <property type="entry name" value="MFS_MdtH"/>
    <property type="match status" value="1"/>
</dbReference>
<dbReference type="InterPro" id="IPR011701">
    <property type="entry name" value="MFS"/>
</dbReference>
<dbReference type="InterPro" id="IPR020846">
    <property type="entry name" value="MFS_dom"/>
</dbReference>
<dbReference type="InterPro" id="IPR036259">
    <property type="entry name" value="MFS_trans_sf"/>
</dbReference>
<dbReference type="InterPro" id="IPR050171">
    <property type="entry name" value="MFS_Transporters"/>
</dbReference>
<dbReference type="InterPro" id="IPR022855">
    <property type="entry name" value="Multidrug-R_MdtH"/>
</dbReference>
<dbReference type="NCBIfam" id="NF008650">
    <property type="entry name" value="PRK11646.1"/>
    <property type="match status" value="1"/>
</dbReference>
<dbReference type="PANTHER" id="PTHR23517:SF2">
    <property type="entry name" value="MULTIDRUG RESISTANCE PROTEIN MDTH"/>
    <property type="match status" value="1"/>
</dbReference>
<dbReference type="PANTHER" id="PTHR23517">
    <property type="entry name" value="RESISTANCE PROTEIN MDTM, PUTATIVE-RELATED-RELATED"/>
    <property type="match status" value="1"/>
</dbReference>
<dbReference type="Pfam" id="PF07690">
    <property type="entry name" value="MFS_1"/>
    <property type="match status" value="1"/>
</dbReference>
<dbReference type="SUPFAM" id="SSF103473">
    <property type="entry name" value="MFS general substrate transporter"/>
    <property type="match status" value="1"/>
</dbReference>
<dbReference type="PROSITE" id="PS50850">
    <property type="entry name" value="MFS"/>
    <property type="match status" value="1"/>
</dbReference>
<accession>A7MG31</accession>
<protein>
    <recommendedName>
        <fullName evidence="1">Multidrug resistance protein MdtH</fullName>
    </recommendedName>
</protein>
<organism>
    <name type="scientific">Cronobacter sakazakii (strain ATCC BAA-894)</name>
    <name type="common">Enterobacter sakazakii</name>
    <dbReference type="NCBI Taxonomy" id="290339"/>
    <lineage>
        <taxon>Bacteria</taxon>
        <taxon>Pseudomonadati</taxon>
        <taxon>Pseudomonadota</taxon>
        <taxon>Gammaproteobacteria</taxon>
        <taxon>Enterobacterales</taxon>
        <taxon>Enterobacteriaceae</taxon>
        <taxon>Cronobacter</taxon>
    </lineage>
</organism>